<reference key="1">
    <citation type="journal article" date="2002" name="DNA Res.">
        <title>Complete genome structure of the thermophilic cyanobacterium Thermosynechococcus elongatus BP-1.</title>
        <authorList>
            <person name="Nakamura Y."/>
            <person name="Kaneko T."/>
            <person name="Sato S."/>
            <person name="Ikeuchi M."/>
            <person name="Katoh H."/>
            <person name="Sasamoto S."/>
            <person name="Watanabe A."/>
            <person name="Iriguchi M."/>
            <person name="Kawashima K."/>
            <person name="Kimura T."/>
            <person name="Kishida Y."/>
            <person name="Kiyokawa C."/>
            <person name="Kohara M."/>
            <person name="Matsumoto M."/>
            <person name="Matsuno A."/>
            <person name="Nakazaki N."/>
            <person name="Shimpo S."/>
            <person name="Sugimoto M."/>
            <person name="Takeuchi C."/>
            <person name="Yamada M."/>
            <person name="Tabata S."/>
        </authorList>
    </citation>
    <scope>NUCLEOTIDE SEQUENCE [LARGE SCALE GENOMIC DNA]</scope>
    <source>
        <strain>NIES-2133 / IAM M-273 / BP-1</strain>
    </source>
</reference>
<evidence type="ECO:0000255" key="1">
    <source>
        <dbReference type="HAMAP-Rule" id="MF_00208"/>
    </source>
</evidence>
<gene>
    <name evidence="1" type="primary">murE</name>
    <name type="ordered locus">tlr1239</name>
</gene>
<accession>Q8DJI4</accession>
<comment type="function">
    <text evidence="1">Catalyzes the addition of meso-diaminopimelic acid to the nucleotide precursor UDP-N-acetylmuramoyl-L-alanyl-D-glutamate (UMAG) in the biosynthesis of bacterial cell-wall peptidoglycan.</text>
</comment>
<comment type="catalytic activity">
    <reaction evidence="1">
        <text>UDP-N-acetyl-alpha-D-muramoyl-L-alanyl-D-glutamate + meso-2,6-diaminopimelate + ATP = UDP-N-acetyl-alpha-D-muramoyl-L-alanyl-gamma-D-glutamyl-meso-2,6-diaminopimelate + ADP + phosphate + H(+)</text>
        <dbReference type="Rhea" id="RHEA:23676"/>
        <dbReference type="ChEBI" id="CHEBI:15378"/>
        <dbReference type="ChEBI" id="CHEBI:30616"/>
        <dbReference type="ChEBI" id="CHEBI:43474"/>
        <dbReference type="ChEBI" id="CHEBI:57791"/>
        <dbReference type="ChEBI" id="CHEBI:83900"/>
        <dbReference type="ChEBI" id="CHEBI:83905"/>
        <dbReference type="ChEBI" id="CHEBI:456216"/>
        <dbReference type="EC" id="6.3.2.13"/>
    </reaction>
</comment>
<comment type="cofactor">
    <cofactor evidence="1">
        <name>Mg(2+)</name>
        <dbReference type="ChEBI" id="CHEBI:18420"/>
    </cofactor>
</comment>
<comment type="pathway">
    <text evidence="1">Cell wall biogenesis; peptidoglycan biosynthesis.</text>
</comment>
<comment type="subcellular location">
    <subcellularLocation>
        <location evidence="1">Cytoplasm</location>
    </subcellularLocation>
</comment>
<comment type="PTM">
    <text evidence="1">Carboxylation is probably crucial for Mg(2+) binding and, consequently, for the gamma-phosphate positioning of ATP.</text>
</comment>
<comment type="similarity">
    <text evidence="1">Belongs to the MurCDEF family. MurE subfamily.</text>
</comment>
<protein>
    <recommendedName>
        <fullName evidence="1">UDP-N-acetylmuramoyl-L-alanyl-D-glutamate--2,6-diaminopimelate ligase</fullName>
        <ecNumber evidence="1">6.3.2.13</ecNumber>
    </recommendedName>
    <alternativeName>
        <fullName evidence="1">Meso-A2pm-adding enzyme</fullName>
    </alternativeName>
    <alternativeName>
        <fullName evidence="1">Meso-diaminopimelate-adding enzyme</fullName>
    </alternativeName>
    <alternativeName>
        <fullName evidence="1">UDP-MurNAc-L-Ala-D-Glu:meso-diaminopimelate ligase</fullName>
    </alternativeName>
    <alternativeName>
        <fullName evidence="1">UDP-MurNAc-tripeptide synthetase</fullName>
    </alternativeName>
    <alternativeName>
        <fullName evidence="1">UDP-N-acetylmuramyl-tripeptide synthetase</fullName>
    </alternativeName>
</protein>
<proteinExistence type="inferred from homology"/>
<dbReference type="EC" id="6.3.2.13" evidence="1"/>
<dbReference type="EMBL" id="BA000039">
    <property type="protein sequence ID" value="BAC08791.1"/>
    <property type="molecule type" value="Genomic_DNA"/>
</dbReference>
<dbReference type="RefSeq" id="NP_682029.1">
    <property type="nucleotide sequence ID" value="NC_004113.1"/>
</dbReference>
<dbReference type="RefSeq" id="WP_011057081.1">
    <property type="nucleotide sequence ID" value="NC_004113.1"/>
</dbReference>
<dbReference type="SMR" id="Q8DJI4"/>
<dbReference type="STRING" id="197221.gene:10747835"/>
<dbReference type="EnsemblBacteria" id="BAC08791">
    <property type="protein sequence ID" value="BAC08791"/>
    <property type="gene ID" value="BAC08791"/>
</dbReference>
<dbReference type="KEGG" id="tel:tlr1239"/>
<dbReference type="PATRIC" id="fig|197221.4.peg.1303"/>
<dbReference type="eggNOG" id="COG0769">
    <property type="taxonomic scope" value="Bacteria"/>
</dbReference>
<dbReference type="UniPathway" id="UPA00219"/>
<dbReference type="Proteomes" id="UP000000440">
    <property type="component" value="Chromosome"/>
</dbReference>
<dbReference type="GO" id="GO:0005737">
    <property type="term" value="C:cytoplasm"/>
    <property type="evidence" value="ECO:0007669"/>
    <property type="project" value="UniProtKB-SubCell"/>
</dbReference>
<dbReference type="GO" id="GO:0005524">
    <property type="term" value="F:ATP binding"/>
    <property type="evidence" value="ECO:0007669"/>
    <property type="project" value="UniProtKB-UniRule"/>
</dbReference>
<dbReference type="GO" id="GO:0000287">
    <property type="term" value="F:magnesium ion binding"/>
    <property type="evidence" value="ECO:0007669"/>
    <property type="project" value="UniProtKB-UniRule"/>
</dbReference>
<dbReference type="GO" id="GO:0004326">
    <property type="term" value="F:tetrahydrofolylpolyglutamate synthase activity"/>
    <property type="evidence" value="ECO:0007669"/>
    <property type="project" value="InterPro"/>
</dbReference>
<dbReference type="GO" id="GO:0008765">
    <property type="term" value="F:UDP-N-acetylmuramoylalanyl-D-glutamate-2,6-diaminopimelate ligase activity"/>
    <property type="evidence" value="ECO:0007669"/>
    <property type="project" value="UniProtKB-UniRule"/>
</dbReference>
<dbReference type="GO" id="GO:0051301">
    <property type="term" value="P:cell division"/>
    <property type="evidence" value="ECO:0007669"/>
    <property type="project" value="UniProtKB-KW"/>
</dbReference>
<dbReference type="GO" id="GO:0071555">
    <property type="term" value="P:cell wall organization"/>
    <property type="evidence" value="ECO:0007669"/>
    <property type="project" value="UniProtKB-KW"/>
</dbReference>
<dbReference type="GO" id="GO:0009252">
    <property type="term" value="P:peptidoglycan biosynthetic process"/>
    <property type="evidence" value="ECO:0007669"/>
    <property type="project" value="UniProtKB-UniRule"/>
</dbReference>
<dbReference type="GO" id="GO:0008360">
    <property type="term" value="P:regulation of cell shape"/>
    <property type="evidence" value="ECO:0007669"/>
    <property type="project" value="UniProtKB-KW"/>
</dbReference>
<dbReference type="FunFam" id="3.90.190.20:FF:000006">
    <property type="entry name" value="UDP-N-acetylmuramoyl-L-alanyl-D-glutamate--2,6-diaminopimelate ligase"/>
    <property type="match status" value="1"/>
</dbReference>
<dbReference type="Gene3D" id="3.90.190.20">
    <property type="entry name" value="Mur ligase, C-terminal domain"/>
    <property type="match status" value="1"/>
</dbReference>
<dbReference type="Gene3D" id="3.40.1190.10">
    <property type="entry name" value="Mur-like, catalytic domain"/>
    <property type="match status" value="1"/>
</dbReference>
<dbReference type="Gene3D" id="3.40.1390.10">
    <property type="entry name" value="MurE/MurF, N-terminal domain"/>
    <property type="match status" value="1"/>
</dbReference>
<dbReference type="HAMAP" id="MF_00208">
    <property type="entry name" value="MurE"/>
    <property type="match status" value="1"/>
</dbReference>
<dbReference type="InterPro" id="IPR018109">
    <property type="entry name" value="Folylpolyglutamate_synth_CS"/>
</dbReference>
<dbReference type="InterPro" id="IPR036565">
    <property type="entry name" value="Mur-like_cat_sf"/>
</dbReference>
<dbReference type="InterPro" id="IPR004101">
    <property type="entry name" value="Mur_ligase_C"/>
</dbReference>
<dbReference type="InterPro" id="IPR036615">
    <property type="entry name" value="Mur_ligase_C_dom_sf"/>
</dbReference>
<dbReference type="InterPro" id="IPR013221">
    <property type="entry name" value="Mur_ligase_cen"/>
</dbReference>
<dbReference type="InterPro" id="IPR000713">
    <property type="entry name" value="Mur_ligase_N"/>
</dbReference>
<dbReference type="InterPro" id="IPR035911">
    <property type="entry name" value="MurE/MurF_N"/>
</dbReference>
<dbReference type="InterPro" id="IPR005761">
    <property type="entry name" value="UDP-N-AcMur-Glu-dNH2Pim_ligase"/>
</dbReference>
<dbReference type="NCBIfam" id="TIGR01085">
    <property type="entry name" value="murE"/>
    <property type="match status" value="1"/>
</dbReference>
<dbReference type="NCBIfam" id="NF001124">
    <property type="entry name" value="PRK00139.1-2"/>
    <property type="match status" value="1"/>
</dbReference>
<dbReference type="NCBIfam" id="NF001126">
    <property type="entry name" value="PRK00139.1-4"/>
    <property type="match status" value="1"/>
</dbReference>
<dbReference type="PANTHER" id="PTHR23135">
    <property type="entry name" value="MUR LIGASE FAMILY MEMBER"/>
    <property type="match status" value="1"/>
</dbReference>
<dbReference type="PANTHER" id="PTHR23135:SF4">
    <property type="entry name" value="UDP-N-ACETYLMURAMOYL-L-ALANYL-D-GLUTAMATE--2,6-DIAMINOPIMELATE LIGASE MURE HOMOLOG, CHLOROPLASTIC"/>
    <property type="match status" value="1"/>
</dbReference>
<dbReference type="Pfam" id="PF01225">
    <property type="entry name" value="Mur_ligase"/>
    <property type="match status" value="1"/>
</dbReference>
<dbReference type="Pfam" id="PF02875">
    <property type="entry name" value="Mur_ligase_C"/>
    <property type="match status" value="1"/>
</dbReference>
<dbReference type="Pfam" id="PF08245">
    <property type="entry name" value="Mur_ligase_M"/>
    <property type="match status" value="1"/>
</dbReference>
<dbReference type="SUPFAM" id="SSF53623">
    <property type="entry name" value="MurD-like peptide ligases, catalytic domain"/>
    <property type="match status" value="1"/>
</dbReference>
<dbReference type="SUPFAM" id="SSF53244">
    <property type="entry name" value="MurD-like peptide ligases, peptide-binding domain"/>
    <property type="match status" value="1"/>
</dbReference>
<dbReference type="SUPFAM" id="SSF63418">
    <property type="entry name" value="MurE/MurF N-terminal domain"/>
    <property type="match status" value="1"/>
</dbReference>
<keyword id="KW-0067">ATP-binding</keyword>
<keyword id="KW-0131">Cell cycle</keyword>
<keyword id="KW-0132">Cell division</keyword>
<keyword id="KW-0133">Cell shape</keyword>
<keyword id="KW-0961">Cell wall biogenesis/degradation</keyword>
<keyword id="KW-0963">Cytoplasm</keyword>
<keyword id="KW-0436">Ligase</keyword>
<keyword id="KW-0460">Magnesium</keyword>
<keyword id="KW-0547">Nucleotide-binding</keyword>
<keyword id="KW-0573">Peptidoglycan synthesis</keyword>
<keyword id="KW-1185">Reference proteome</keyword>
<name>MURE_THEVB</name>
<feature type="chain" id="PRO_0000101959" description="UDP-N-acetylmuramoyl-L-alanyl-D-glutamate--2,6-diaminopimelate ligase">
    <location>
        <begin position="1"/>
        <end position="497"/>
    </location>
</feature>
<feature type="short sequence motif" description="Meso-diaminopimelate recognition motif">
    <location>
        <begin position="409"/>
        <end position="412"/>
    </location>
</feature>
<feature type="binding site" evidence="1">
    <location>
        <position position="32"/>
    </location>
    <ligand>
        <name>UDP-N-acetyl-alpha-D-muramoyl-L-alanyl-D-glutamate</name>
        <dbReference type="ChEBI" id="CHEBI:83900"/>
    </ligand>
</feature>
<feature type="binding site" evidence="1">
    <location>
        <begin position="113"/>
        <end position="119"/>
    </location>
    <ligand>
        <name>ATP</name>
        <dbReference type="ChEBI" id="CHEBI:30616"/>
    </ligand>
</feature>
<feature type="binding site" evidence="1">
    <location>
        <begin position="155"/>
        <end position="156"/>
    </location>
    <ligand>
        <name>UDP-N-acetyl-alpha-D-muramoyl-L-alanyl-D-glutamate</name>
        <dbReference type="ChEBI" id="CHEBI:83900"/>
    </ligand>
</feature>
<feature type="binding site" evidence="1">
    <location>
        <position position="182"/>
    </location>
    <ligand>
        <name>UDP-N-acetyl-alpha-D-muramoyl-L-alanyl-D-glutamate</name>
        <dbReference type="ChEBI" id="CHEBI:83900"/>
    </ligand>
</feature>
<feature type="binding site" evidence="1">
    <location>
        <position position="188"/>
    </location>
    <ligand>
        <name>UDP-N-acetyl-alpha-D-muramoyl-L-alanyl-D-glutamate</name>
        <dbReference type="ChEBI" id="CHEBI:83900"/>
    </ligand>
</feature>
<feature type="binding site" evidence="1">
    <location>
        <position position="190"/>
    </location>
    <ligand>
        <name>UDP-N-acetyl-alpha-D-muramoyl-L-alanyl-D-glutamate</name>
        <dbReference type="ChEBI" id="CHEBI:83900"/>
    </ligand>
</feature>
<feature type="binding site" evidence="1">
    <location>
        <position position="385"/>
    </location>
    <ligand>
        <name>meso-2,6-diaminopimelate</name>
        <dbReference type="ChEBI" id="CHEBI:57791"/>
    </ligand>
</feature>
<feature type="binding site" evidence="1">
    <location>
        <begin position="409"/>
        <end position="412"/>
    </location>
    <ligand>
        <name>meso-2,6-diaminopimelate</name>
        <dbReference type="ChEBI" id="CHEBI:57791"/>
    </ligand>
</feature>
<feature type="binding site" evidence="1">
    <location>
        <position position="460"/>
    </location>
    <ligand>
        <name>meso-2,6-diaminopimelate</name>
        <dbReference type="ChEBI" id="CHEBI:57791"/>
    </ligand>
</feature>
<feature type="binding site" evidence="1">
    <location>
        <position position="464"/>
    </location>
    <ligand>
        <name>meso-2,6-diaminopimelate</name>
        <dbReference type="ChEBI" id="CHEBI:57791"/>
    </ligand>
</feature>
<feature type="modified residue" description="N6-carboxylysine" evidence="1">
    <location>
        <position position="222"/>
    </location>
</feature>
<sequence length="497" mass="53933">MNLRELLTAAAITPGFEHPALNQEVKSLRMNSWECEPGSLFIGMPGTRVEGGNFWPSALAAGAIAAVVSPQAKPREGEACVIVVPDIERACGRLAAAFYNYPSQHLSLLGVTGTNGKTTTTHLVEHLLNRVGYPTALLGTLYSRWPGHCEVASHTTPFAVTLQEQLAAAVDAGCRFGVMEVSSHALAQDRVWGCQFEVAAFTNLTQDHLDYHRDLEDYFAAKAKLFTADYLKGRAILNGDDPFGQRLAQQLPRDRYWTYGLSKDADFRAENLNYRSNGVTGAVHTPLGSGTLDSPLVGQFNVANVLAAIAMGAAVGLPLEAMLNALRDFPGVPGRMEQVRLDPEQDITVVVDYAHTPDSLENLLRAARPFIPGKLICVFGCGGDRDRSKRPQMGAIAARLADQVVVTSDNPRTENPQRILDDILAGIPPETAMIVEGDRRQAILQAILTAAPGDGVIIAGKGHEDYQILGTEKVHFDDREEARNALKERLKQPLQRG</sequence>
<organism>
    <name type="scientific">Thermosynechococcus vestitus (strain NIES-2133 / IAM M-273 / BP-1)</name>
    <dbReference type="NCBI Taxonomy" id="197221"/>
    <lineage>
        <taxon>Bacteria</taxon>
        <taxon>Bacillati</taxon>
        <taxon>Cyanobacteriota</taxon>
        <taxon>Cyanophyceae</taxon>
        <taxon>Acaryochloridales</taxon>
        <taxon>Thermosynechococcaceae</taxon>
        <taxon>Thermosynechococcus</taxon>
    </lineage>
</organism>